<proteinExistence type="evidence at transcript level"/>
<accession>Q8CJ58</accession>
<protein>
    <recommendedName>
        <fullName>Clarin-1</fullName>
    </recommendedName>
    <alternativeName>
        <fullName>Usher syndrome type-3 protein homolog</fullName>
    </alternativeName>
</protein>
<evidence type="ECO:0000250" key="1"/>
<evidence type="ECO:0000250" key="2">
    <source>
        <dbReference type="UniProtKB" id="P58418"/>
    </source>
</evidence>
<evidence type="ECO:0000255" key="3"/>
<evidence type="ECO:0000305" key="4"/>
<feature type="chain" id="PRO_0000274696" description="Clarin-1">
    <location>
        <begin position="1"/>
        <end position="232"/>
    </location>
</feature>
<feature type="transmembrane region" description="Helical" evidence="3">
    <location>
        <begin position="8"/>
        <end position="28"/>
    </location>
</feature>
<feature type="transmembrane region" description="Helical" evidence="3">
    <location>
        <begin position="101"/>
        <end position="121"/>
    </location>
</feature>
<feature type="transmembrane region" description="Helical" evidence="3">
    <location>
        <begin position="135"/>
        <end position="155"/>
    </location>
</feature>
<feature type="transmembrane region" description="Helical" evidence="3">
    <location>
        <begin position="186"/>
        <end position="206"/>
    </location>
</feature>
<feature type="glycosylation site" description="N-linked (GlcNAc...) asparagine" evidence="3">
    <location>
        <position position="48"/>
    </location>
</feature>
<feature type="glycosylation site" description="N-linked (GlcNAc...) asparagine" evidence="3">
    <location>
        <position position="184"/>
    </location>
</feature>
<comment type="function">
    <text evidence="1">May have a role in the excitatory ribbon synapse junctions between hair cells and cochlear ganglion cells and presumably also in analogous synapses within the retina.</text>
</comment>
<comment type="subcellular location">
    <subcellularLocation>
        <location evidence="2">Cell membrane</location>
        <topology evidence="3">Multi-pass membrane protein</topology>
    </subcellularLocation>
</comment>
<comment type="similarity">
    <text evidence="4">Belongs to the clarin family.</text>
</comment>
<name>CLRN1_RAT</name>
<organism>
    <name type="scientific">Rattus norvegicus</name>
    <name type="common">Rat</name>
    <dbReference type="NCBI Taxonomy" id="10116"/>
    <lineage>
        <taxon>Eukaryota</taxon>
        <taxon>Metazoa</taxon>
        <taxon>Chordata</taxon>
        <taxon>Craniata</taxon>
        <taxon>Vertebrata</taxon>
        <taxon>Euteleostomi</taxon>
        <taxon>Mammalia</taxon>
        <taxon>Eutheria</taxon>
        <taxon>Euarchontoglires</taxon>
        <taxon>Glires</taxon>
        <taxon>Rodentia</taxon>
        <taxon>Myomorpha</taxon>
        <taxon>Muroidea</taxon>
        <taxon>Muridae</taxon>
        <taxon>Murinae</taxon>
        <taxon>Rattus</taxon>
    </lineage>
</organism>
<reference key="1">
    <citation type="journal article" date="2002" name="Am. J. Hum. Genet.">
        <title>Usher syndrome type III: revised genomic structure of the USH3 gene and identification of novel mutations.</title>
        <authorList>
            <person name="Fields R.R."/>
            <person name="Zhou G."/>
            <person name="Huang D."/>
            <person name="Davis J.R."/>
            <person name="Moeller C."/>
            <person name="Jacobson S.G."/>
            <person name="Kimberling W.J."/>
            <person name="Sumegi J."/>
        </authorList>
    </citation>
    <scope>NUCLEOTIDE SEQUENCE [MRNA]</scope>
    <source>
        <strain>Sprague-Dawley</strain>
    </source>
</reference>
<keyword id="KW-1003">Cell membrane</keyword>
<keyword id="KW-0325">Glycoprotein</keyword>
<keyword id="KW-1009">Hearing</keyword>
<keyword id="KW-0472">Membrane</keyword>
<keyword id="KW-1185">Reference proteome</keyword>
<keyword id="KW-0716">Sensory transduction</keyword>
<keyword id="KW-0812">Transmembrane</keyword>
<keyword id="KW-1133">Transmembrane helix</keyword>
<keyword id="KW-0844">Vision</keyword>
<sequence>MPSQQKKIIFCMAGVFSFACALGVVTALGTPLWIKATVLCKTGALLVNASGQELDKFMGEMQYGLFHGEGVRQCGLGARPFRFSFFPDLLKAIPVSIHVNIILFSMILVVLTMVGTAFFMYNAFGKPFESLHGPLGLYLVSFISGSCGCLVMILFASEVKIHRLSEKIANFKEGTYAYKTQNENYTTSFWVVFICFFVHFLNGLLIRLAGFQFPFTKSKETETTNVASDLMY</sequence>
<gene>
    <name type="primary">Clrn1</name>
    <name type="synonym">Ush3a</name>
</gene>
<dbReference type="EMBL" id="AF482698">
    <property type="protein sequence ID" value="AAN07149.1"/>
    <property type="molecule type" value="mRNA"/>
</dbReference>
<dbReference type="FunCoup" id="Q8CJ58">
    <property type="interactions" value="11"/>
</dbReference>
<dbReference type="STRING" id="10116.ENSRNOP00000060407"/>
<dbReference type="CarbonylDB" id="Q8CJ58"/>
<dbReference type="GlyCosmos" id="Q8CJ58">
    <property type="glycosylation" value="2 sites, No reported glycans"/>
</dbReference>
<dbReference type="GlyGen" id="Q8CJ58">
    <property type="glycosylation" value="2 sites"/>
</dbReference>
<dbReference type="PhosphoSitePlus" id="Q8CJ58"/>
<dbReference type="PaxDb" id="10116-ENSRNOP00000060407"/>
<dbReference type="UCSC" id="RGD:628779">
    <property type="organism name" value="rat"/>
</dbReference>
<dbReference type="AGR" id="RGD:628779"/>
<dbReference type="RGD" id="628779">
    <property type="gene designation" value="Clrn1"/>
</dbReference>
<dbReference type="eggNOG" id="ENOG502QQVB">
    <property type="taxonomic scope" value="Eukaryota"/>
</dbReference>
<dbReference type="InParanoid" id="Q8CJ58"/>
<dbReference type="PRO" id="PR:Q8CJ58"/>
<dbReference type="Proteomes" id="UP000002494">
    <property type="component" value="Unplaced"/>
</dbReference>
<dbReference type="GO" id="GO:0045178">
    <property type="term" value="C:basal part of cell"/>
    <property type="evidence" value="ECO:0000266"/>
    <property type="project" value="RGD"/>
</dbReference>
<dbReference type="GO" id="GO:0030027">
    <property type="term" value="C:lamellipodium"/>
    <property type="evidence" value="ECO:0000266"/>
    <property type="project" value="RGD"/>
</dbReference>
<dbReference type="GO" id="GO:0015630">
    <property type="term" value="C:microtubule cytoskeleton"/>
    <property type="evidence" value="ECO:0000266"/>
    <property type="project" value="RGD"/>
</dbReference>
<dbReference type="GO" id="GO:0005902">
    <property type="term" value="C:microvillus"/>
    <property type="evidence" value="ECO:0000266"/>
    <property type="project" value="RGD"/>
</dbReference>
<dbReference type="GO" id="GO:0005886">
    <property type="term" value="C:plasma membrane"/>
    <property type="evidence" value="ECO:0000266"/>
    <property type="project" value="RGD"/>
</dbReference>
<dbReference type="GO" id="GO:0032420">
    <property type="term" value="C:stereocilium"/>
    <property type="evidence" value="ECO:0000266"/>
    <property type="project" value="RGD"/>
</dbReference>
<dbReference type="GO" id="GO:0030140">
    <property type="term" value="C:trans-Golgi network transport vesicle"/>
    <property type="evidence" value="ECO:0000266"/>
    <property type="project" value="RGD"/>
</dbReference>
<dbReference type="GO" id="GO:0007015">
    <property type="term" value="P:actin filament organization"/>
    <property type="evidence" value="ECO:0000266"/>
    <property type="project" value="RGD"/>
</dbReference>
<dbReference type="GO" id="GO:0060117">
    <property type="term" value="P:auditory receptor cell development"/>
    <property type="evidence" value="ECO:0000266"/>
    <property type="project" value="RGD"/>
</dbReference>
<dbReference type="GO" id="GO:0060088">
    <property type="term" value="P:auditory receptor cell stereocilium organization"/>
    <property type="evidence" value="ECO:0000266"/>
    <property type="project" value="RGD"/>
</dbReference>
<dbReference type="GO" id="GO:0048870">
    <property type="term" value="P:cell motility"/>
    <property type="evidence" value="ECO:0000266"/>
    <property type="project" value="RGD"/>
</dbReference>
<dbReference type="GO" id="GO:0050957">
    <property type="term" value="P:equilibrioception"/>
    <property type="evidence" value="ECO:0000266"/>
    <property type="project" value="RGD"/>
</dbReference>
<dbReference type="GO" id="GO:0050885">
    <property type="term" value="P:neuromuscular process controlling balance"/>
    <property type="evidence" value="ECO:0000266"/>
    <property type="project" value="RGD"/>
</dbReference>
<dbReference type="GO" id="GO:0045494">
    <property type="term" value="P:photoreceptor cell maintenance"/>
    <property type="evidence" value="ECO:0000266"/>
    <property type="project" value="RGD"/>
</dbReference>
<dbReference type="GO" id="GO:0010592">
    <property type="term" value="P:positive regulation of lamellipodium assembly"/>
    <property type="evidence" value="ECO:0000266"/>
    <property type="project" value="RGD"/>
</dbReference>
<dbReference type="GO" id="GO:0050953">
    <property type="term" value="P:sensory perception of light stimulus"/>
    <property type="evidence" value="ECO:0000266"/>
    <property type="project" value="RGD"/>
</dbReference>
<dbReference type="GO" id="GO:0007605">
    <property type="term" value="P:sensory perception of sound"/>
    <property type="evidence" value="ECO:0000266"/>
    <property type="project" value="RGD"/>
</dbReference>
<dbReference type="GO" id="GO:0007601">
    <property type="term" value="P:visual perception"/>
    <property type="evidence" value="ECO:0007669"/>
    <property type="project" value="UniProtKB-KW"/>
</dbReference>
<dbReference type="FunFam" id="1.20.140.150:FF:000045">
    <property type="entry name" value="Clarin 1"/>
    <property type="match status" value="1"/>
</dbReference>
<dbReference type="InterPro" id="IPR026748">
    <property type="entry name" value="Clarin"/>
</dbReference>
<dbReference type="PANTHER" id="PTHR31548">
    <property type="entry name" value="CLARIN"/>
    <property type="match status" value="1"/>
</dbReference>
<dbReference type="PANTHER" id="PTHR31548:SF4">
    <property type="entry name" value="CLARIN-1"/>
    <property type="match status" value="1"/>
</dbReference>